<gene>
    <name type="primary">IPK1</name>
    <name type="ordered locus">DEHA2G17600g</name>
</gene>
<evidence type="ECO:0000250" key="1"/>
<evidence type="ECO:0000305" key="2"/>
<name>IPK1_DEBHA</name>
<proteinExistence type="inferred from homology"/>
<keyword id="KW-0067">ATP-binding</keyword>
<keyword id="KW-0418">Kinase</keyword>
<keyword id="KW-0547">Nucleotide-binding</keyword>
<keyword id="KW-0539">Nucleus</keyword>
<keyword id="KW-1185">Reference proteome</keyword>
<keyword id="KW-0808">Transferase</keyword>
<reference key="1">
    <citation type="journal article" date="2004" name="Nature">
        <title>Genome evolution in yeasts.</title>
        <authorList>
            <person name="Dujon B."/>
            <person name="Sherman D."/>
            <person name="Fischer G."/>
            <person name="Durrens P."/>
            <person name="Casaregola S."/>
            <person name="Lafontaine I."/>
            <person name="de Montigny J."/>
            <person name="Marck C."/>
            <person name="Neuveglise C."/>
            <person name="Talla E."/>
            <person name="Goffard N."/>
            <person name="Frangeul L."/>
            <person name="Aigle M."/>
            <person name="Anthouard V."/>
            <person name="Babour A."/>
            <person name="Barbe V."/>
            <person name="Barnay S."/>
            <person name="Blanchin S."/>
            <person name="Beckerich J.-M."/>
            <person name="Beyne E."/>
            <person name="Bleykasten C."/>
            <person name="Boisrame A."/>
            <person name="Boyer J."/>
            <person name="Cattolico L."/>
            <person name="Confanioleri F."/>
            <person name="de Daruvar A."/>
            <person name="Despons L."/>
            <person name="Fabre E."/>
            <person name="Fairhead C."/>
            <person name="Ferry-Dumazet H."/>
            <person name="Groppi A."/>
            <person name="Hantraye F."/>
            <person name="Hennequin C."/>
            <person name="Jauniaux N."/>
            <person name="Joyet P."/>
            <person name="Kachouri R."/>
            <person name="Kerrest A."/>
            <person name="Koszul R."/>
            <person name="Lemaire M."/>
            <person name="Lesur I."/>
            <person name="Ma L."/>
            <person name="Muller H."/>
            <person name="Nicaud J.-M."/>
            <person name="Nikolski M."/>
            <person name="Oztas S."/>
            <person name="Ozier-Kalogeropoulos O."/>
            <person name="Pellenz S."/>
            <person name="Potier S."/>
            <person name="Richard G.-F."/>
            <person name="Straub M.-L."/>
            <person name="Suleau A."/>
            <person name="Swennen D."/>
            <person name="Tekaia F."/>
            <person name="Wesolowski-Louvel M."/>
            <person name="Westhof E."/>
            <person name="Wirth B."/>
            <person name="Zeniou-Meyer M."/>
            <person name="Zivanovic Y."/>
            <person name="Bolotin-Fukuhara M."/>
            <person name="Thierry A."/>
            <person name="Bouchier C."/>
            <person name="Caudron B."/>
            <person name="Scarpelli C."/>
            <person name="Gaillardin C."/>
            <person name="Weissenbach J."/>
            <person name="Wincker P."/>
            <person name="Souciet J.-L."/>
        </authorList>
    </citation>
    <scope>NUCLEOTIDE SEQUENCE [LARGE SCALE GENOMIC DNA]</scope>
    <source>
        <strain>ATCC 36239 / CBS 767 / BCRC 21394 / JCM 1990 / NBRC 0083 / IGC 2968</strain>
    </source>
</reference>
<accession>Q6BHL8</accession>
<comment type="function">
    <text evidence="1">Has kinase activity and phosphorylates inositol-1,3,4,5,6-pentakisphosphate (Ins(1,3,4,5,6)P5) to produce 1,2,3,4,5,6-hexakisphosphate (InsP6), also known as phytate.</text>
</comment>
<comment type="catalytic activity">
    <reaction>
        <text>1D-myo-inositol 1,3,4,5,6-pentakisphosphate + ATP = 1D-myo-inositol hexakisphosphate + ADP + H(+)</text>
        <dbReference type="Rhea" id="RHEA:20313"/>
        <dbReference type="ChEBI" id="CHEBI:15378"/>
        <dbReference type="ChEBI" id="CHEBI:30616"/>
        <dbReference type="ChEBI" id="CHEBI:57733"/>
        <dbReference type="ChEBI" id="CHEBI:58130"/>
        <dbReference type="ChEBI" id="CHEBI:456216"/>
        <dbReference type="EC" id="2.7.1.158"/>
    </reaction>
</comment>
<comment type="subcellular location">
    <subcellularLocation>
        <location evidence="1">Nucleus</location>
    </subcellularLocation>
</comment>
<comment type="domain">
    <text>The EXKPK motif is conserved in inositol-pentakisphosphate 2-kinases of both family 1 and 2.</text>
</comment>
<comment type="similarity">
    <text evidence="2">Belongs to the IPK1 type 1 family.</text>
</comment>
<organism>
    <name type="scientific">Debaryomyces hansenii (strain ATCC 36239 / CBS 767 / BCRC 21394 / JCM 1990 / NBRC 0083 / IGC 2968)</name>
    <name type="common">Yeast</name>
    <name type="synonym">Torulaspora hansenii</name>
    <dbReference type="NCBI Taxonomy" id="284592"/>
    <lineage>
        <taxon>Eukaryota</taxon>
        <taxon>Fungi</taxon>
        <taxon>Dikarya</taxon>
        <taxon>Ascomycota</taxon>
        <taxon>Saccharomycotina</taxon>
        <taxon>Pichiomycetes</taxon>
        <taxon>Debaryomycetaceae</taxon>
        <taxon>Debaryomyces</taxon>
    </lineage>
</organism>
<feature type="chain" id="PRO_0000110524" description="Inositol-pentakisphosphate 2-kinase">
    <location>
        <begin position="1"/>
        <end position="377"/>
    </location>
</feature>
<feature type="short sequence motif" description="EXKPK motif">
    <location>
        <begin position="169"/>
        <end position="173"/>
    </location>
</feature>
<dbReference type="EC" id="2.7.1.158"/>
<dbReference type="EMBL" id="CR382139">
    <property type="protein sequence ID" value="CAG90809.2"/>
    <property type="molecule type" value="Genomic_DNA"/>
</dbReference>
<dbReference type="RefSeq" id="XP_462303.2">
    <property type="nucleotide sequence ID" value="XM_462303.1"/>
</dbReference>
<dbReference type="FunCoup" id="Q6BHL8">
    <property type="interactions" value="42"/>
</dbReference>
<dbReference type="STRING" id="284592.Q6BHL8"/>
<dbReference type="GeneID" id="2905241"/>
<dbReference type="KEGG" id="dha:DEHA2G17600g"/>
<dbReference type="VEuPathDB" id="FungiDB:DEHA2G17600g"/>
<dbReference type="eggNOG" id="ENOG502S7VH">
    <property type="taxonomic scope" value="Eukaryota"/>
</dbReference>
<dbReference type="HOGENOM" id="CLU_046294_1_0_1"/>
<dbReference type="InParanoid" id="Q6BHL8"/>
<dbReference type="OMA" id="FIELRCK"/>
<dbReference type="OrthoDB" id="272370at2759"/>
<dbReference type="Proteomes" id="UP000000599">
    <property type="component" value="Chromosome G"/>
</dbReference>
<dbReference type="GO" id="GO:0005634">
    <property type="term" value="C:nucleus"/>
    <property type="evidence" value="ECO:0007669"/>
    <property type="project" value="UniProtKB-SubCell"/>
</dbReference>
<dbReference type="GO" id="GO:0005524">
    <property type="term" value="F:ATP binding"/>
    <property type="evidence" value="ECO:0007669"/>
    <property type="project" value="UniProtKB-KW"/>
</dbReference>
<dbReference type="GO" id="GO:0035299">
    <property type="term" value="F:inositol-1,3,4,5,6-pentakisphosphate 2-kinase activity"/>
    <property type="evidence" value="ECO:0007669"/>
    <property type="project" value="UniProtKB-EC"/>
</dbReference>
<dbReference type="GO" id="GO:0032958">
    <property type="term" value="P:inositol phosphate biosynthetic process"/>
    <property type="evidence" value="ECO:0007669"/>
    <property type="project" value="TreeGrafter"/>
</dbReference>
<dbReference type="Gene3D" id="3.30.200.110">
    <property type="entry name" value="Inositol-pentakisphosphate 2-kinase, N-lobe"/>
    <property type="match status" value="1"/>
</dbReference>
<dbReference type="InterPro" id="IPR009286">
    <property type="entry name" value="Ins_P5_2-kin"/>
</dbReference>
<dbReference type="InterPro" id="IPR043001">
    <property type="entry name" value="IP5_2-K_N_lobe"/>
</dbReference>
<dbReference type="PANTHER" id="PTHR14456">
    <property type="entry name" value="INOSITOL POLYPHOSPHATE KINASE 1"/>
    <property type="match status" value="1"/>
</dbReference>
<dbReference type="PANTHER" id="PTHR14456:SF2">
    <property type="entry name" value="INOSITOL-PENTAKISPHOSPHATE 2-KINASE"/>
    <property type="match status" value="1"/>
</dbReference>
<dbReference type="Pfam" id="PF06090">
    <property type="entry name" value="Ins_P5_2-kin"/>
    <property type="match status" value="1"/>
</dbReference>
<sequence length="377" mass="44424">MEIYKITTPGEWTYFAKGNANILFKYTGSNDYLRHKLLRVRLLKEDEQYISTCELYDFIELKCKPLFPHQIIDIQLVVLTTDFVNQLNNEGNKLMVKERYGLLLPNILDGDYCKQFLSRNCQLYIGTDTTVQEAGVNRNTVPEKLQGQEQKKLQKQEQFNNDIDSVIFEIKPKWLYDNISSNYCRTCSLNQLRGFQRHFCPLDLLYEETIDQGLDDILSLIPQDLLIEISETNKIPVKQLFRIFLNNPNNVFQKLKEYQRINNKNDLIKNITSIYDVSQNLSLVMTLRDVGLFIKFEKYNKYNNIHNSHNNINNLINIEGYGKFLLTCNIYDLDLKSKLKYKHWLDTEEKLQSIYNSSNPDWRHCVKVHDNTNNLGT</sequence>
<protein>
    <recommendedName>
        <fullName>Inositol-pentakisphosphate 2-kinase</fullName>
        <ecNumber>2.7.1.158</ecNumber>
    </recommendedName>
    <alternativeName>
        <fullName>Inositol-1,3,4,5,6-pentakisphosphate 2-kinase</fullName>
    </alternativeName>
    <alternativeName>
        <fullName>Ins(1,3,4,5,6)P5 2-kinase</fullName>
        <shortName>InsP5 2-kinase</shortName>
    </alternativeName>
</protein>